<organism>
    <name type="scientific">Pectobacterium atrosepticum (strain SCRI 1043 / ATCC BAA-672)</name>
    <name type="common">Erwinia carotovora subsp. atroseptica</name>
    <dbReference type="NCBI Taxonomy" id="218491"/>
    <lineage>
        <taxon>Bacteria</taxon>
        <taxon>Pseudomonadati</taxon>
        <taxon>Pseudomonadota</taxon>
        <taxon>Gammaproteobacteria</taxon>
        <taxon>Enterobacterales</taxon>
        <taxon>Pectobacteriaceae</taxon>
        <taxon>Pectobacterium</taxon>
    </lineage>
</organism>
<gene>
    <name evidence="1" type="primary">fliE</name>
    <name type="ordered locus">ECA1727</name>
</gene>
<feature type="chain" id="PRO_1000045856" description="Flagellar hook-basal body complex protein FliE">
    <location>
        <begin position="1"/>
        <end position="104"/>
    </location>
</feature>
<keyword id="KW-0975">Bacterial flagellum</keyword>
<keyword id="KW-1185">Reference proteome</keyword>
<comment type="subcellular location">
    <subcellularLocation>
        <location evidence="1">Bacterial flagellum basal body</location>
    </subcellularLocation>
</comment>
<comment type="similarity">
    <text evidence="1">Belongs to the FliE family.</text>
</comment>
<proteinExistence type="inferred from homology"/>
<reference key="1">
    <citation type="journal article" date="2004" name="Proc. Natl. Acad. Sci. U.S.A.">
        <title>Genome sequence of the enterobacterial phytopathogen Erwinia carotovora subsp. atroseptica and characterization of virulence factors.</title>
        <authorList>
            <person name="Bell K.S."/>
            <person name="Sebaihia M."/>
            <person name="Pritchard L."/>
            <person name="Holden M.T.G."/>
            <person name="Hyman L.J."/>
            <person name="Holeva M.C."/>
            <person name="Thomson N.R."/>
            <person name="Bentley S.D."/>
            <person name="Churcher L.J.C."/>
            <person name="Mungall K."/>
            <person name="Atkin R."/>
            <person name="Bason N."/>
            <person name="Brooks K."/>
            <person name="Chillingworth T."/>
            <person name="Clark K."/>
            <person name="Doggett J."/>
            <person name="Fraser A."/>
            <person name="Hance Z."/>
            <person name="Hauser H."/>
            <person name="Jagels K."/>
            <person name="Moule S."/>
            <person name="Norbertczak H."/>
            <person name="Ormond D."/>
            <person name="Price C."/>
            <person name="Quail M.A."/>
            <person name="Sanders M."/>
            <person name="Walker D."/>
            <person name="Whitehead S."/>
            <person name="Salmond G.P.C."/>
            <person name="Birch P.R.J."/>
            <person name="Parkhill J."/>
            <person name="Toth I.K."/>
        </authorList>
    </citation>
    <scope>NUCLEOTIDE SEQUENCE [LARGE SCALE GENOMIC DNA]</scope>
    <source>
        <strain>SCRI 1043 / ATCC BAA-672</strain>
    </source>
</reference>
<dbReference type="EMBL" id="BX950851">
    <property type="protein sequence ID" value="CAG74632.1"/>
    <property type="molecule type" value="Genomic_DNA"/>
</dbReference>
<dbReference type="RefSeq" id="WP_011093304.1">
    <property type="nucleotide sequence ID" value="NC_004547.2"/>
</dbReference>
<dbReference type="SMR" id="Q6D6F8"/>
<dbReference type="STRING" id="218491.ECA1727"/>
<dbReference type="KEGG" id="eca:ECA1727"/>
<dbReference type="PATRIC" id="fig|218491.5.peg.1753"/>
<dbReference type="eggNOG" id="COG1677">
    <property type="taxonomic scope" value="Bacteria"/>
</dbReference>
<dbReference type="HOGENOM" id="CLU_147249_0_2_6"/>
<dbReference type="OrthoDB" id="8909229at2"/>
<dbReference type="Proteomes" id="UP000007966">
    <property type="component" value="Chromosome"/>
</dbReference>
<dbReference type="GO" id="GO:0009425">
    <property type="term" value="C:bacterial-type flagellum basal body"/>
    <property type="evidence" value="ECO:0007669"/>
    <property type="project" value="UniProtKB-SubCell"/>
</dbReference>
<dbReference type="GO" id="GO:0003774">
    <property type="term" value="F:cytoskeletal motor activity"/>
    <property type="evidence" value="ECO:0007669"/>
    <property type="project" value="InterPro"/>
</dbReference>
<dbReference type="GO" id="GO:0005198">
    <property type="term" value="F:structural molecule activity"/>
    <property type="evidence" value="ECO:0007669"/>
    <property type="project" value="InterPro"/>
</dbReference>
<dbReference type="GO" id="GO:0071973">
    <property type="term" value="P:bacterial-type flagellum-dependent cell motility"/>
    <property type="evidence" value="ECO:0007669"/>
    <property type="project" value="InterPro"/>
</dbReference>
<dbReference type="HAMAP" id="MF_00724">
    <property type="entry name" value="FliE"/>
    <property type="match status" value="1"/>
</dbReference>
<dbReference type="InterPro" id="IPR001624">
    <property type="entry name" value="FliE"/>
</dbReference>
<dbReference type="NCBIfam" id="TIGR00205">
    <property type="entry name" value="fliE"/>
    <property type="match status" value="1"/>
</dbReference>
<dbReference type="PANTHER" id="PTHR34653">
    <property type="match status" value="1"/>
</dbReference>
<dbReference type="PANTHER" id="PTHR34653:SF1">
    <property type="entry name" value="FLAGELLAR HOOK-BASAL BODY COMPLEX PROTEIN FLIE"/>
    <property type="match status" value="1"/>
</dbReference>
<dbReference type="Pfam" id="PF02049">
    <property type="entry name" value="FliE"/>
    <property type="match status" value="1"/>
</dbReference>
<dbReference type="PRINTS" id="PR01006">
    <property type="entry name" value="FLGHOOKFLIE"/>
</dbReference>
<protein>
    <recommendedName>
        <fullName evidence="1">Flagellar hook-basal body complex protein FliE</fullName>
    </recommendedName>
</protein>
<accession>Q6D6F8</accession>
<evidence type="ECO:0000255" key="1">
    <source>
        <dbReference type="HAMAP-Rule" id="MF_00724"/>
    </source>
</evidence>
<name>FLIE_PECAS</name>
<sequence>MSVQGIDGVLQQMQVKALQASDTPIARPSVEPGFASELKAAIDKISDTQQVARTQAEKFTLGVPGVALNDVMVDLQKSSISMQMGIQVRNKLVSAYQEVMNMSV</sequence>